<sequence length="369" mass="39883">MKYKRIVFKVGTSSLTNEDGSLSRSKVKDITQQLAMLHEAGHELILVSSGAIAAGFGALGFKKRPTKIADKQASAAVGQGLLLEEYTTNLLLRQIVSAQILLTQDDFVDKRRYKNAHQALSVLLNRGAIPIINENDSVVIDELKVGDNDTLSAQVAAMVQADLLVFLTDVDGLYTGNPNSDPRAKRLERIETINREIIDMAGGAGSSNGTGGMLTKIKAATIATESGVPVYICSSLKSDSMIEAAEETEDGSYFVAQEKGLRTQKQWLAFYAQSQGSIWVDKGAAEALSQHGKSLLLSGIVEAEGVFSYGDIVTVFDKESGKSLGKGRVQFGASALEDILRSQKAKGVLIYRDDWISITPEIQLLFTEF</sequence>
<protein>
    <recommendedName>
        <fullName evidence="1">Glutamate 5-kinase</fullName>
        <ecNumber evidence="1">2.7.2.11</ecNumber>
    </recommendedName>
    <alternativeName>
        <fullName evidence="1">Gamma-glutamyl kinase</fullName>
        <shortName evidence="1">GK</shortName>
    </alternativeName>
</protein>
<feature type="chain" id="PRO_0000109733" description="Glutamate 5-kinase">
    <location>
        <begin position="1"/>
        <end position="369"/>
    </location>
</feature>
<feature type="domain" description="PUA" evidence="1">
    <location>
        <begin position="275"/>
        <end position="355"/>
    </location>
</feature>
<feature type="binding site" evidence="1">
    <location>
        <position position="9"/>
    </location>
    <ligand>
        <name>ATP</name>
        <dbReference type="ChEBI" id="CHEBI:30616"/>
    </ligand>
</feature>
<feature type="binding site" evidence="1">
    <location>
        <position position="49"/>
    </location>
    <ligand>
        <name>substrate</name>
    </ligand>
</feature>
<feature type="binding site" evidence="1">
    <location>
        <position position="136"/>
    </location>
    <ligand>
        <name>substrate</name>
    </ligand>
</feature>
<feature type="binding site" evidence="1">
    <location>
        <position position="148"/>
    </location>
    <ligand>
        <name>substrate</name>
    </ligand>
</feature>
<feature type="binding site" evidence="1">
    <location>
        <begin position="168"/>
        <end position="169"/>
    </location>
    <ligand>
        <name>ATP</name>
        <dbReference type="ChEBI" id="CHEBI:30616"/>
    </ligand>
</feature>
<feature type="binding site" evidence="1">
    <location>
        <begin position="210"/>
        <end position="216"/>
    </location>
    <ligand>
        <name>ATP</name>
        <dbReference type="ChEBI" id="CHEBI:30616"/>
    </ligand>
</feature>
<gene>
    <name evidence="1" type="primary">proB</name>
    <name type="ordered locus">spr0832</name>
</gene>
<proteinExistence type="inferred from homology"/>
<organism>
    <name type="scientific">Streptococcus pneumoniae (strain ATCC BAA-255 / R6)</name>
    <dbReference type="NCBI Taxonomy" id="171101"/>
    <lineage>
        <taxon>Bacteria</taxon>
        <taxon>Bacillati</taxon>
        <taxon>Bacillota</taxon>
        <taxon>Bacilli</taxon>
        <taxon>Lactobacillales</taxon>
        <taxon>Streptococcaceae</taxon>
        <taxon>Streptococcus</taxon>
    </lineage>
</organism>
<accession>Q8DQ61</accession>
<reference key="1">
    <citation type="journal article" date="2001" name="J. Bacteriol.">
        <title>Genome of the bacterium Streptococcus pneumoniae strain R6.</title>
        <authorList>
            <person name="Hoskins J."/>
            <person name="Alborn W.E. Jr."/>
            <person name="Arnold J."/>
            <person name="Blaszczak L.C."/>
            <person name="Burgett S."/>
            <person name="DeHoff B.S."/>
            <person name="Estrem S.T."/>
            <person name="Fritz L."/>
            <person name="Fu D.-J."/>
            <person name="Fuller W."/>
            <person name="Geringer C."/>
            <person name="Gilmour R."/>
            <person name="Glass J.S."/>
            <person name="Khoja H."/>
            <person name="Kraft A.R."/>
            <person name="Lagace R.E."/>
            <person name="LeBlanc D.J."/>
            <person name="Lee L.N."/>
            <person name="Lefkowitz E.J."/>
            <person name="Lu J."/>
            <person name="Matsushima P."/>
            <person name="McAhren S.M."/>
            <person name="McHenney M."/>
            <person name="McLeaster K."/>
            <person name="Mundy C.W."/>
            <person name="Nicas T.I."/>
            <person name="Norris F.H."/>
            <person name="O'Gara M."/>
            <person name="Peery R.B."/>
            <person name="Robertson G.T."/>
            <person name="Rockey P."/>
            <person name="Sun P.-M."/>
            <person name="Winkler M.E."/>
            <person name="Yang Y."/>
            <person name="Young-Bellido M."/>
            <person name="Zhao G."/>
            <person name="Zook C.A."/>
            <person name="Baltz R.H."/>
            <person name="Jaskunas S.R."/>
            <person name="Rosteck P.R. Jr."/>
            <person name="Skatrud P.L."/>
            <person name="Glass J.I."/>
        </authorList>
    </citation>
    <scope>NUCLEOTIDE SEQUENCE [LARGE SCALE GENOMIC DNA]</scope>
    <source>
        <strain>ATCC BAA-255 / R6</strain>
    </source>
</reference>
<dbReference type="EC" id="2.7.2.11" evidence="1"/>
<dbReference type="EMBL" id="AE007317">
    <property type="protein sequence ID" value="AAK99636.1"/>
    <property type="status" value="ALT_INIT"/>
    <property type="molecule type" value="Genomic_DNA"/>
</dbReference>
<dbReference type="PIR" id="H97975">
    <property type="entry name" value="H97975"/>
</dbReference>
<dbReference type="RefSeq" id="NP_358426.1">
    <property type="nucleotide sequence ID" value="NC_003098.1"/>
</dbReference>
<dbReference type="RefSeq" id="WP_000875743.1">
    <property type="nucleotide sequence ID" value="NC_003098.1"/>
</dbReference>
<dbReference type="SMR" id="Q8DQ61"/>
<dbReference type="STRING" id="171101.spr0832"/>
<dbReference type="KEGG" id="spr:spr0832"/>
<dbReference type="PATRIC" id="fig|171101.6.peg.921"/>
<dbReference type="eggNOG" id="COG0263">
    <property type="taxonomic scope" value="Bacteria"/>
</dbReference>
<dbReference type="HOGENOM" id="CLU_025400_2_0_9"/>
<dbReference type="UniPathway" id="UPA00098">
    <property type="reaction ID" value="UER00359"/>
</dbReference>
<dbReference type="Proteomes" id="UP000000586">
    <property type="component" value="Chromosome"/>
</dbReference>
<dbReference type="GO" id="GO:0005829">
    <property type="term" value="C:cytosol"/>
    <property type="evidence" value="ECO:0000318"/>
    <property type="project" value="GO_Central"/>
</dbReference>
<dbReference type="GO" id="GO:0005524">
    <property type="term" value="F:ATP binding"/>
    <property type="evidence" value="ECO:0007669"/>
    <property type="project" value="UniProtKB-KW"/>
</dbReference>
<dbReference type="GO" id="GO:0004349">
    <property type="term" value="F:glutamate 5-kinase activity"/>
    <property type="evidence" value="ECO:0000318"/>
    <property type="project" value="GO_Central"/>
</dbReference>
<dbReference type="GO" id="GO:0003723">
    <property type="term" value="F:RNA binding"/>
    <property type="evidence" value="ECO:0007669"/>
    <property type="project" value="InterPro"/>
</dbReference>
<dbReference type="GO" id="GO:0055129">
    <property type="term" value="P:L-proline biosynthetic process"/>
    <property type="evidence" value="ECO:0007669"/>
    <property type="project" value="UniProtKB-UniRule"/>
</dbReference>
<dbReference type="GO" id="GO:0006561">
    <property type="term" value="P:proline biosynthetic process"/>
    <property type="evidence" value="ECO:0000318"/>
    <property type="project" value="GO_Central"/>
</dbReference>
<dbReference type="CDD" id="cd04242">
    <property type="entry name" value="AAK_G5K_ProB"/>
    <property type="match status" value="1"/>
</dbReference>
<dbReference type="CDD" id="cd21157">
    <property type="entry name" value="PUA_G5K"/>
    <property type="match status" value="1"/>
</dbReference>
<dbReference type="FunFam" id="2.30.130.10:FF:000011">
    <property type="entry name" value="Glutamate 5-kinase"/>
    <property type="match status" value="1"/>
</dbReference>
<dbReference type="FunFam" id="3.40.1160.10:FF:000018">
    <property type="entry name" value="Glutamate 5-kinase"/>
    <property type="match status" value="1"/>
</dbReference>
<dbReference type="Gene3D" id="3.40.1160.10">
    <property type="entry name" value="Acetylglutamate kinase-like"/>
    <property type="match status" value="1"/>
</dbReference>
<dbReference type="Gene3D" id="2.30.130.10">
    <property type="entry name" value="PUA domain"/>
    <property type="match status" value="1"/>
</dbReference>
<dbReference type="HAMAP" id="MF_00456">
    <property type="entry name" value="ProB"/>
    <property type="match status" value="1"/>
</dbReference>
<dbReference type="InterPro" id="IPR036393">
    <property type="entry name" value="AceGlu_kinase-like_sf"/>
</dbReference>
<dbReference type="InterPro" id="IPR001048">
    <property type="entry name" value="Asp/Glu/Uridylate_kinase"/>
</dbReference>
<dbReference type="InterPro" id="IPR041739">
    <property type="entry name" value="G5K_ProB"/>
</dbReference>
<dbReference type="InterPro" id="IPR001057">
    <property type="entry name" value="Glu/AcGlu_kinase"/>
</dbReference>
<dbReference type="InterPro" id="IPR011529">
    <property type="entry name" value="Glu_5kinase"/>
</dbReference>
<dbReference type="InterPro" id="IPR005715">
    <property type="entry name" value="Glu_5kinase/COase_Synthase"/>
</dbReference>
<dbReference type="InterPro" id="IPR019797">
    <property type="entry name" value="Glutamate_5-kinase_CS"/>
</dbReference>
<dbReference type="InterPro" id="IPR002478">
    <property type="entry name" value="PUA"/>
</dbReference>
<dbReference type="InterPro" id="IPR015947">
    <property type="entry name" value="PUA-like_sf"/>
</dbReference>
<dbReference type="InterPro" id="IPR036974">
    <property type="entry name" value="PUA_sf"/>
</dbReference>
<dbReference type="NCBIfam" id="TIGR01027">
    <property type="entry name" value="proB"/>
    <property type="match status" value="1"/>
</dbReference>
<dbReference type="PANTHER" id="PTHR43654">
    <property type="entry name" value="GLUTAMATE 5-KINASE"/>
    <property type="match status" value="1"/>
</dbReference>
<dbReference type="PANTHER" id="PTHR43654:SF1">
    <property type="entry name" value="ISOPENTENYL PHOSPHATE KINASE"/>
    <property type="match status" value="1"/>
</dbReference>
<dbReference type="Pfam" id="PF00696">
    <property type="entry name" value="AA_kinase"/>
    <property type="match status" value="1"/>
</dbReference>
<dbReference type="Pfam" id="PF01472">
    <property type="entry name" value="PUA"/>
    <property type="match status" value="1"/>
</dbReference>
<dbReference type="PIRSF" id="PIRSF000729">
    <property type="entry name" value="GK"/>
    <property type="match status" value="1"/>
</dbReference>
<dbReference type="PRINTS" id="PR00474">
    <property type="entry name" value="GLU5KINASE"/>
</dbReference>
<dbReference type="SMART" id="SM00359">
    <property type="entry name" value="PUA"/>
    <property type="match status" value="1"/>
</dbReference>
<dbReference type="SUPFAM" id="SSF53633">
    <property type="entry name" value="Carbamate kinase-like"/>
    <property type="match status" value="1"/>
</dbReference>
<dbReference type="SUPFAM" id="SSF88697">
    <property type="entry name" value="PUA domain-like"/>
    <property type="match status" value="1"/>
</dbReference>
<dbReference type="PROSITE" id="PS00902">
    <property type="entry name" value="GLUTAMATE_5_KINASE"/>
    <property type="match status" value="1"/>
</dbReference>
<dbReference type="PROSITE" id="PS50890">
    <property type="entry name" value="PUA"/>
    <property type="match status" value="1"/>
</dbReference>
<evidence type="ECO:0000255" key="1">
    <source>
        <dbReference type="HAMAP-Rule" id="MF_00456"/>
    </source>
</evidence>
<evidence type="ECO:0000305" key="2"/>
<comment type="function">
    <text evidence="1">Catalyzes the transfer of a phosphate group to glutamate to form L-glutamate 5-phosphate.</text>
</comment>
<comment type="catalytic activity">
    <reaction evidence="1">
        <text>L-glutamate + ATP = L-glutamyl 5-phosphate + ADP</text>
        <dbReference type="Rhea" id="RHEA:14877"/>
        <dbReference type="ChEBI" id="CHEBI:29985"/>
        <dbReference type="ChEBI" id="CHEBI:30616"/>
        <dbReference type="ChEBI" id="CHEBI:58274"/>
        <dbReference type="ChEBI" id="CHEBI:456216"/>
        <dbReference type="EC" id="2.7.2.11"/>
    </reaction>
</comment>
<comment type="pathway">
    <text evidence="1">Amino-acid biosynthesis; L-proline biosynthesis; L-glutamate 5-semialdehyde from L-glutamate: step 1/2.</text>
</comment>
<comment type="subcellular location">
    <subcellularLocation>
        <location evidence="1">Cytoplasm</location>
    </subcellularLocation>
</comment>
<comment type="similarity">
    <text evidence="1">Belongs to the glutamate 5-kinase family.</text>
</comment>
<comment type="sequence caution" evidence="2">
    <conflict type="erroneous initiation">
        <sequence resource="EMBL-CDS" id="AAK99636"/>
    </conflict>
</comment>
<keyword id="KW-0028">Amino-acid biosynthesis</keyword>
<keyword id="KW-0067">ATP-binding</keyword>
<keyword id="KW-0963">Cytoplasm</keyword>
<keyword id="KW-0418">Kinase</keyword>
<keyword id="KW-0547">Nucleotide-binding</keyword>
<keyword id="KW-0641">Proline biosynthesis</keyword>
<keyword id="KW-1185">Reference proteome</keyword>
<keyword id="KW-0808">Transferase</keyword>
<name>PROB_STRR6</name>